<dbReference type="EMBL" id="AL954747">
    <property type="protein sequence ID" value="CAD84233.1"/>
    <property type="molecule type" value="Genomic_DNA"/>
</dbReference>
<dbReference type="RefSeq" id="WP_011110957.1">
    <property type="nucleotide sequence ID" value="NC_004757.1"/>
</dbReference>
<dbReference type="SMR" id="Q82XF2"/>
<dbReference type="STRING" id="228410.NE0322"/>
<dbReference type="GeneID" id="87103528"/>
<dbReference type="KEGG" id="neu:NE0322"/>
<dbReference type="eggNOG" id="COG2924">
    <property type="taxonomic scope" value="Bacteria"/>
</dbReference>
<dbReference type="HOGENOM" id="CLU_170994_0_0_4"/>
<dbReference type="OrthoDB" id="9804318at2"/>
<dbReference type="PhylomeDB" id="Q82XF2"/>
<dbReference type="Proteomes" id="UP000001416">
    <property type="component" value="Chromosome"/>
</dbReference>
<dbReference type="GO" id="GO:0005829">
    <property type="term" value="C:cytosol"/>
    <property type="evidence" value="ECO:0007669"/>
    <property type="project" value="TreeGrafter"/>
</dbReference>
<dbReference type="GO" id="GO:0005506">
    <property type="term" value="F:iron ion binding"/>
    <property type="evidence" value="ECO:0007669"/>
    <property type="project" value="UniProtKB-UniRule"/>
</dbReference>
<dbReference type="GO" id="GO:0034599">
    <property type="term" value="P:cellular response to oxidative stress"/>
    <property type="evidence" value="ECO:0007669"/>
    <property type="project" value="TreeGrafter"/>
</dbReference>
<dbReference type="FunFam" id="1.10.3880.10:FF:000001">
    <property type="entry name" value="Probable Fe(2+)-trafficking protein"/>
    <property type="match status" value="1"/>
</dbReference>
<dbReference type="Gene3D" id="1.10.3880.10">
    <property type="entry name" value="Fe(II) trafficking protein YggX"/>
    <property type="match status" value="1"/>
</dbReference>
<dbReference type="HAMAP" id="MF_00686">
    <property type="entry name" value="Fe_traffic_YggX"/>
    <property type="match status" value="1"/>
</dbReference>
<dbReference type="InterPro" id="IPR007457">
    <property type="entry name" value="Fe_traffick_prot_YggX"/>
</dbReference>
<dbReference type="InterPro" id="IPR036766">
    <property type="entry name" value="Fe_traffick_prot_YggX_sf"/>
</dbReference>
<dbReference type="NCBIfam" id="NF003817">
    <property type="entry name" value="PRK05408.1"/>
    <property type="match status" value="1"/>
</dbReference>
<dbReference type="PANTHER" id="PTHR36965">
    <property type="entry name" value="FE(2+)-TRAFFICKING PROTEIN-RELATED"/>
    <property type="match status" value="1"/>
</dbReference>
<dbReference type="PANTHER" id="PTHR36965:SF1">
    <property type="entry name" value="FE(2+)-TRAFFICKING PROTEIN-RELATED"/>
    <property type="match status" value="1"/>
</dbReference>
<dbReference type="Pfam" id="PF04362">
    <property type="entry name" value="Iron_traffic"/>
    <property type="match status" value="1"/>
</dbReference>
<dbReference type="PIRSF" id="PIRSF029827">
    <property type="entry name" value="Fe_traffic_YggX"/>
    <property type="match status" value="1"/>
</dbReference>
<dbReference type="SUPFAM" id="SSF111148">
    <property type="entry name" value="YggX-like"/>
    <property type="match status" value="1"/>
</dbReference>
<accession>Q82XF2</accession>
<feature type="chain" id="PRO_0000214494" description="Probable Fe(2+)-trafficking protein">
    <location>
        <begin position="1"/>
        <end position="90"/>
    </location>
</feature>
<comment type="function">
    <text evidence="1">Could be a mediator in iron transactions between iron acquisition and iron-requiring processes, such as synthesis and/or repair of Fe-S clusters in biosynthetic enzymes.</text>
</comment>
<comment type="similarity">
    <text evidence="1">Belongs to the Fe(2+)-trafficking protein family.</text>
</comment>
<name>FETP_NITEU</name>
<organism>
    <name type="scientific">Nitrosomonas europaea (strain ATCC 19718 / CIP 103999 / KCTC 2705 / NBRC 14298)</name>
    <dbReference type="NCBI Taxonomy" id="228410"/>
    <lineage>
        <taxon>Bacteria</taxon>
        <taxon>Pseudomonadati</taxon>
        <taxon>Pseudomonadota</taxon>
        <taxon>Betaproteobacteria</taxon>
        <taxon>Nitrosomonadales</taxon>
        <taxon>Nitrosomonadaceae</taxon>
        <taxon>Nitrosomonas</taxon>
    </lineage>
</organism>
<keyword id="KW-0408">Iron</keyword>
<keyword id="KW-1185">Reference proteome</keyword>
<proteinExistence type="inferred from homology"/>
<protein>
    <recommendedName>
        <fullName evidence="1">Probable Fe(2+)-trafficking protein</fullName>
    </recommendedName>
</protein>
<gene>
    <name type="ordered locus">NE0322</name>
</gene>
<sequence>MVRSVKCIRLGCEAEGLDFPPYPGELGKRIFDNVSKEAWSQWIKHQTMLVNEMRLNLADIKARKYLASQMEAYFFGEGADQPAGYIPPDK</sequence>
<reference key="1">
    <citation type="journal article" date="2003" name="J. Bacteriol.">
        <title>Complete genome sequence of the ammonia-oxidizing bacterium and obligate chemolithoautotroph Nitrosomonas europaea.</title>
        <authorList>
            <person name="Chain P."/>
            <person name="Lamerdin J.E."/>
            <person name="Larimer F.W."/>
            <person name="Regala W."/>
            <person name="Lao V."/>
            <person name="Land M.L."/>
            <person name="Hauser L."/>
            <person name="Hooper A.B."/>
            <person name="Klotz M.G."/>
            <person name="Norton J."/>
            <person name="Sayavedra-Soto L.A."/>
            <person name="Arciero D.M."/>
            <person name="Hommes N.G."/>
            <person name="Whittaker M.M."/>
            <person name="Arp D.J."/>
        </authorList>
    </citation>
    <scope>NUCLEOTIDE SEQUENCE [LARGE SCALE GENOMIC DNA]</scope>
    <source>
        <strain>ATCC 19718 / CIP 103999 / KCTC 2705 / NBRC 14298</strain>
    </source>
</reference>
<evidence type="ECO:0000255" key="1">
    <source>
        <dbReference type="HAMAP-Rule" id="MF_00686"/>
    </source>
</evidence>